<organism>
    <name type="scientific">Homo sapiens</name>
    <name type="common">Human</name>
    <dbReference type="NCBI Taxonomy" id="9606"/>
    <lineage>
        <taxon>Eukaryota</taxon>
        <taxon>Metazoa</taxon>
        <taxon>Chordata</taxon>
        <taxon>Craniata</taxon>
        <taxon>Vertebrata</taxon>
        <taxon>Euteleostomi</taxon>
        <taxon>Mammalia</taxon>
        <taxon>Eutheria</taxon>
        <taxon>Euarchontoglires</taxon>
        <taxon>Primates</taxon>
        <taxon>Haplorrhini</taxon>
        <taxon>Catarrhini</taxon>
        <taxon>Hominidae</taxon>
        <taxon>Homo</taxon>
    </lineage>
</organism>
<gene>
    <name evidence="36 40" type="primary">C1S</name>
</gene>
<protein>
    <recommendedName>
        <fullName evidence="38">Complement C1s subcomponent</fullName>
        <ecNumber evidence="9 16 27 29 30 33 35">3.4.21.42</ecNumber>
    </recommendedName>
    <alternativeName>
        <fullName>C1 esterase</fullName>
    </alternativeName>
    <alternativeName>
        <fullName>Complement component 1 subcomponent s</fullName>
    </alternativeName>
    <component>
        <recommendedName>
            <fullName>Complement C1s subcomponent heavy chain</fullName>
        </recommendedName>
        <alternativeName>
            <fullName evidence="37">Complement C1s subcomponent chain A</fullName>
        </alternativeName>
    </component>
    <component>
        <recommendedName>
            <fullName>Complement C1s subcomponent light chain</fullName>
        </recommendedName>
        <alternativeName>
            <fullName evidence="37">Complement C1s subcomponent chain B</fullName>
        </alternativeName>
    </component>
</protein>
<proteinExistence type="evidence at protein level"/>
<dbReference type="EC" id="3.4.21.42" evidence="9 16 27 29 30 33 35"/>
<dbReference type="EMBL" id="X06596">
    <property type="protein sequence ID" value="CAA29817.1"/>
    <property type="molecule type" value="mRNA"/>
</dbReference>
<dbReference type="EMBL" id="M18767">
    <property type="protein sequence ID" value="AAA51853.1"/>
    <property type="molecule type" value="mRNA"/>
</dbReference>
<dbReference type="EMBL" id="J04080">
    <property type="protein sequence ID" value="AAA51852.1"/>
    <property type="molecule type" value="mRNA"/>
</dbReference>
<dbReference type="EMBL" id="CH471116">
    <property type="protein sequence ID" value="EAW88689.1"/>
    <property type="molecule type" value="Genomic_DNA"/>
</dbReference>
<dbReference type="EMBL" id="CH471116">
    <property type="protein sequence ID" value="EAW88690.1"/>
    <property type="molecule type" value="Genomic_DNA"/>
</dbReference>
<dbReference type="EMBL" id="BC056903">
    <property type="protein sequence ID" value="AAH56903.1"/>
    <property type="molecule type" value="mRNA"/>
</dbReference>
<dbReference type="EMBL" id="AB009076">
    <property type="protein sequence ID" value="BAA86864.1"/>
    <property type="molecule type" value="Genomic_DNA"/>
</dbReference>
<dbReference type="CCDS" id="CCDS31735.1"/>
<dbReference type="PIR" id="A40496">
    <property type="entry name" value="C1HUS"/>
</dbReference>
<dbReference type="RefSeq" id="NP_001333779.1">
    <property type="nucleotide sequence ID" value="NM_001346850.1"/>
</dbReference>
<dbReference type="RefSeq" id="NP_001725.1">
    <property type="nucleotide sequence ID" value="NM_001734.5"/>
</dbReference>
<dbReference type="RefSeq" id="NP_958850.1">
    <property type="nucleotide sequence ID" value="NM_201442.4"/>
</dbReference>
<dbReference type="RefSeq" id="XP_005253817.1">
    <property type="nucleotide sequence ID" value="XM_005253760.1"/>
</dbReference>
<dbReference type="RefSeq" id="XP_054229092.1">
    <property type="nucleotide sequence ID" value="XM_054373117.1"/>
</dbReference>
<dbReference type="PDB" id="1ELV">
    <property type="method" value="X-ray"/>
    <property type="resolution" value="1.70 A"/>
    <property type="chains" value="A=356-688"/>
</dbReference>
<dbReference type="PDB" id="1NZI">
    <property type="method" value="X-ray"/>
    <property type="resolution" value="1.50 A"/>
    <property type="chains" value="A/B=16-174"/>
</dbReference>
<dbReference type="PDB" id="4J1Y">
    <property type="method" value="X-ray"/>
    <property type="resolution" value="2.66 A"/>
    <property type="chains" value="A/B=292-688"/>
</dbReference>
<dbReference type="PDB" id="4LMF">
    <property type="method" value="X-ray"/>
    <property type="resolution" value="2.92 A"/>
    <property type="chains" value="A/B/C/D=17-292"/>
</dbReference>
<dbReference type="PDB" id="4LOR">
    <property type="method" value="X-ray"/>
    <property type="resolution" value="2.50 A"/>
    <property type="chains" value="A=17-292"/>
</dbReference>
<dbReference type="PDB" id="4LOS">
    <property type="method" value="X-ray"/>
    <property type="resolution" value="2.00 A"/>
    <property type="chains" value="A=172-358"/>
</dbReference>
<dbReference type="PDB" id="4LOT">
    <property type="method" value="X-ray"/>
    <property type="resolution" value="2.92 A"/>
    <property type="chains" value="A=175-423"/>
</dbReference>
<dbReference type="PDB" id="6F1C">
    <property type="method" value="X-ray"/>
    <property type="resolution" value="4.20 A"/>
    <property type="chains" value="B/D=16-292"/>
</dbReference>
<dbReference type="PDB" id="6F1H">
    <property type="method" value="X-ray"/>
    <property type="resolution" value="4.50 A"/>
    <property type="chains" value="B/D=17-292"/>
</dbReference>
<dbReference type="PDB" id="8GMN">
    <property type="method" value="X-ray"/>
    <property type="resolution" value="2.60 A"/>
    <property type="chains" value="A/B/C/D=358-688"/>
</dbReference>
<dbReference type="PDB" id="8TYP">
    <property type="method" value="X-ray"/>
    <property type="resolution" value="1.80 A"/>
    <property type="chains" value="A=358-688"/>
</dbReference>
<dbReference type="PDBsum" id="1ELV"/>
<dbReference type="PDBsum" id="1NZI"/>
<dbReference type="PDBsum" id="4J1Y"/>
<dbReference type="PDBsum" id="4LMF"/>
<dbReference type="PDBsum" id="4LOR"/>
<dbReference type="PDBsum" id="4LOS"/>
<dbReference type="PDBsum" id="4LOT"/>
<dbReference type="PDBsum" id="6F1C"/>
<dbReference type="PDBsum" id="6F1H"/>
<dbReference type="PDBsum" id="8GMN"/>
<dbReference type="PDBsum" id="8TYP"/>
<dbReference type="SASBDB" id="P09871"/>
<dbReference type="SMR" id="P09871"/>
<dbReference type="BioGRID" id="107177">
    <property type="interactions" value="14"/>
</dbReference>
<dbReference type="ComplexPortal" id="CPX-1920">
    <property type="entry name" value="Complement C1 complex"/>
</dbReference>
<dbReference type="CORUM" id="P09871"/>
<dbReference type="FunCoup" id="P09871">
    <property type="interactions" value="349"/>
</dbReference>
<dbReference type="IntAct" id="P09871">
    <property type="interactions" value="19"/>
</dbReference>
<dbReference type="MINT" id="P09871"/>
<dbReference type="STRING" id="9606.ENSP00000385035"/>
<dbReference type="BindingDB" id="P09871"/>
<dbReference type="ChEMBL" id="CHEMBL3913"/>
<dbReference type="DrugBank" id="DB02371">
    <property type="generic name" value="2-(2-Hydroxy-1,1-Dihydroxymethyl-Ethylamino)-Ethanesulfonic Acid"/>
</dbReference>
<dbReference type="DrugBank" id="DB09228">
    <property type="generic name" value="Conestat alfa"/>
</dbReference>
<dbReference type="DrugBank" id="DB09130">
    <property type="generic name" value="Copper"/>
</dbReference>
<dbReference type="DrugBank" id="DB12831">
    <property type="generic name" value="Gabexate"/>
</dbReference>
<dbReference type="DrugBank" id="DB06404">
    <property type="generic name" value="Human C1-esterase inhibitor"/>
</dbReference>
<dbReference type="DrugBank" id="DB14996">
    <property type="generic name" value="Sutimlimab"/>
</dbReference>
<dbReference type="DrugBank" id="DB01593">
    <property type="generic name" value="Zinc"/>
</dbReference>
<dbReference type="DrugBank" id="DB14487">
    <property type="generic name" value="Zinc acetate"/>
</dbReference>
<dbReference type="DrugBank" id="DB14533">
    <property type="generic name" value="Zinc chloride"/>
</dbReference>
<dbReference type="DrugBank" id="DB14548">
    <property type="generic name" value="Zinc sulfate, unspecified form"/>
</dbReference>
<dbReference type="DrugCentral" id="P09871"/>
<dbReference type="GuidetoPHARMACOLOGY" id="2335"/>
<dbReference type="MEROPS" id="S01.193"/>
<dbReference type="GlyConnect" id="1144">
    <property type="glycosylation" value="4 N-Linked glycans (2 sites)"/>
</dbReference>
<dbReference type="GlyCosmos" id="P09871">
    <property type="glycosylation" value="2 sites, 4 glycans"/>
</dbReference>
<dbReference type="GlyGen" id="P09871">
    <property type="glycosylation" value="5 sites, 7 N-linked glycans (2 sites), 1 O-linked glycan (1 site)"/>
</dbReference>
<dbReference type="iPTMnet" id="P09871"/>
<dbReference type="PhosphoSitePlus" id="P09871"/>
<dbReference type="BioMuta" id="C1S"/>
<dbReference type="DMDM" id="115205"/>
<dbReference type="CPTAC" id="non-CPTAC-1103"/>
<dbReference type="jPOST" id="P09871"/>
<dbReference type="MassIVE" id="P09871"/>
<dbReference type="PaxDb" id="9606-ENSP00000385035"/>
<dbReference type="PeptideAtlas" id="P09871"/>
<dbReference type="ProteomicsDB" id="52270"/>
<dbReference type="ABCD" id="P09871">
    <property type="antibodies" value="28 sequenced antibodies"/>
</dbReference>
<dbReference type="Antibodypedia" id="3384">
    <property type="antibodies" value="661 antibodies from 37 providers"/>
</dbReference>
<dbReference type="DNASU" id="716"/>
<dbReference type="Ensembl" id="ENST00000328916.7">
    <property type="protein sequence ID" value="ENSP00000328173.3"/>
    <property type="gene ID" value="ENSG00000182326.17"/>
</dbReference>
<dbReference type="Ensembl" id="ENST00000360817.10">
    <property type="protein sequence ID" value="ENSP00000354057.5"/>
    <property type="gene ID" value="ENSG00000182326.17"/>
</dbReference>
<dbReference type="Ensembl" id="ENST00000406697.5">
    <property type="protein sequence ID" value="ENSP00000385035.1"/>
    <property type="gene ID" value="ENSG00000182326.17"/>
</dbReference>
<dbReference type="GeneID" id="716"/>
<dbReference type="KEGG" id="hsa:716"/>
<dbReference type="MANE-Select" id="ENST00000360817.10">
    <property type="protein sequence ID" value="ENSP00000354057.5"/>
    <property type="RefSeq nucleotide sequence ID" value="NM_001734.5"/>
    <property type="RefSeq protein sequence ID" value="NP_001725.1"/>
</dbReference>
<dbReference type="UCSC" id="uc001qsj.4">
    <property type="organism name" value="human"/>
</dbReference>
<dbReference type="AGR" id="HGNC:1247"/>
<dbReference type="CTD" id="716"/>
<dbReference type="DisGeNET" id="716"/>
<dbReference type="GeneCards" id="C1S"/>
<dbReference type="GeneReviews" id="C1S"/>
<dbReference type="HGNC" id="HGNC:1247">
    <property type="gene designation" value="C1S"/>
</dbReference>
<dbReference type="HPA" id="ENSG00000182326">
    <property type="expression patterns" value="Tissue enriched (liver)"/>
</dbReference>
<dbReference type="MalaCards" id="C1S"/>
<dbReference type="MIM" id="120580">
    <property type="type" value="gene"/>
</dbReference>
<dbReference type="MIM" id="613783">
    <property type="type" value="phenotype"/>
</dbReference>
<dbReference type="MIM" id="617174">
    <property type="type" value="phenotype"/>
</dbReference>
<dbReference type="neXtProt" id="NX_P09871"/>
<dbReference type="OpenTargets" id="ENSG00000182326"/>
<dbReference type="Orphanet" id="169147">
    <property type="disease" value="Immunodeficiency due to a classical component pathway complement deficiency"/>
</dbReference>
<dbReference type="Orphanet" id="75392">
    <property type="disease" value="Periodontal Ehlers-Danlos syndrome"/>
</dbReference>
<dbReference type="PharmGKB" id="PA25636"/>
<dbReference type="VEuPathDB" id="HostDB:ENSG00000182326"/>
<dbReference type="eggNOG" id="KOG3627">
    <property type="taxonomic scope" value="Eukaryota"/>
</dbReference>
<dbReference type="GeneTree" id="ENSGT00940000157473"/>
<dbReference type="HOGENOM" id="CLU_006842_14_1_1"/>
<dbReference type="InParanoid" id="P09871"/>
<dbReference type="OMA" id="DFADAPC"/>
<dbReference type="OrthoDB" id="9985152at2759"/>
<dbReference type="PAN-GO" id="P09871">
    <property type="GO annotations" value="2 GO annotations based on evolutionary models"/>
</dbReference>
<dbReference type="PhylomeDB" id="P09871"/>
<dbReference type="TreeFam" id="TF330373"/>
<dbReference type="BRENDA" id="3.4.21.42">
    <property type="organism ID" value="2681"/>
</dbReference>
<dbReference type="PathwayCommons" id="P09871"/>
<dbReference type="Reactome" id="R-HSA-166663">
    <property type="pathway name" value="Initial triggering of complement"/>
</dbReference>
<dbReference type="Reactome" id="R-HSA-173623">
    <property type="pathway name" value="Classical antibody-mediated complement activation"/>
</dbReference>
<dbReference type="Reactome" id="R-HSA-977606">
    <property type="pathway name" value="Regulation of Complement cascade"/>
</dbReference>
<dbReference type="SABIO-RK" id="P09871"/>
<dbReference type="SignaLink" id="P09871"/>
<dbReference type="SIGNOR" id="P09871"/>
<dbReference type="BioGRID-ORCS" id="716">
    <property type="hits" value="13 hits in 1157 CRISPR screens"/>
</dbReference>
<dbReference type="ChiTaRS" id="C1S">
    <property type="organism name" value="human"/>
</dbReference>
<dbReference type="EvolutionaryTrace" id="P09871"/>
<dbReference type="GeneWiki" id="C1S"/>
<dbReference type="GenomeRNAi" id="716"/>
<dbReference type="Pharos" id="P09871">
    <property type="development level" value="Tclin"/>
</dbReference>
<dbReference type="PRO" id="PR:P09871"/>
<dbReference type="Proteomes" id="UP000005640">
    <property type="component" value="Chromosome 12"/>
</dbReference>
<dbReference type="RNAct" id="P09871">
    <property type="molecule type" value="protein"/>
</dbReference>
<dbReference type="Bgee" id="ENSG00000182326">
    <property type="expression patterns" value="Expressed in pericardium and 201 other cell types or tissues"/>
</dbReference>
<dbReference type="ExpressionAtlas" id="P09871">
    <property type="expression patterns" value="baseline and differential"/>
</dbReference>
<dbReference type="GO" id="GO:0072562">
    <property type="term" value="C:blood microparticle"/>
    <property type="evidence" value="ECO:0007005"/>
    <property type="project" value="UniProtKB"/>
</dbReference>
<dbReference type="GO" id="GO:0005576">
    <property type="term" value="C:extracellular region"/>
    <property type="evidence" value="ECO:0000304"/>
    <property type="project" value="Reactome"/>
</dbReference>
<dbReference type="GO" id="GO:0005615">
    <property type="term" value="C:extracellular space"/>
    <property type="evidence" value="ECO:0000318"/>
    <property type="project" value="GO_Central"/>
</dbReference>
<dbReference type="GO" id="GO:0005509">
    <property type="term" value="F:calcium ion binding"/>
    <property type="evidence" value="ECO:0007669"/>
    <property type="project" value="InterPro"/>
</dbReference>
<dbReference type="GO" id="GO:0042802">
    <property type="term" value="F:identical protein binding"/>
    <property type="evidence" value="ECO:0000353"/>
    <property type="project" value="IntAct"/>
</dbReference>
<dbReference type="GO" id="GO:0004252">
    <property type="term" value="F:serine-type endopeptidase activity"/>
    <property type="evidence" value="ECO:0000314"/>
    <property type="project" value="UniProtKB"/>
</dbReference>
<dbReference type="GO" id="GO:0006958">
    <property type="term" value="P:complement activation, classical pathway"/>
    <property type="evidence" value="ECO:0007669"/>
    <property type="project" value="UniProtKB-KW"/>
</dbReference>
<dbReference type="GO" id="GO:0045087">
    <property type="term" value="P:innate immune response"/>
    <property type="evidence" value="ECO:0007669"/>
    <property type="project" value="UniProtKB-KW"/>
</dbReference>
<dbReference type="GO" id="GO:0006508">
    <property type="term" value="P:proteolysis"/>
    <property type="evidence" value="ECO:0007669"/>
    <property type="project" value="UniProtKB-KW"/>
</dbReference>
<dbReference type="CDD" id="cd00033">
    <property type="entry name" value="CCP"/>
    <property type="match status" value="2"/>
</dbReference>
<dbReference type="CDD" id="cd00041">
    <property type="entry name" value="CUB"/>
    <property type="match status" value="2"/>
</dbReference>
<dbReference type="CDD" id="cd00054">
    <property type="entry name" value="EGF_CA"/>
    <property type="match status" value="1"/>
</dbReference>
<dbReference type="CDD" id="cd00190">
    <property type="entry name" value="Tryp_SPc"/>
    <property type="match status" value="1"/>
</dbReference>
<dbReference type="FunFam" id="2.10.70.10:FF:000049">
    <property type="entry name" value="Complement C1s subcomponent"/>
    <property type="match status" value="1"/>
</dbReference>
<dbReference type="FunFam" id="2.40.10.10:FF:000059">
    <property type="entry name" value="Complement C1s subcomponent"/>
    <property type="match status" value="1"/>
</dbReference>
<dbReference type="FunFam" id="2.40.10.10:FF:000067">
    <property type="entry name" value="Complement C1s subcomponent"/>
    <property type="match status" value="1"/>
</dbReference>
<dbReference type="FunFam" id="2.60.120.290:FF:000034">
    <property type="entry name" value="complement C1s subcomponent"/>
    <property type="match status" value="1"/>
</dbReference>
<dbReference type="FunFam" id="2.10.25.10:FF:000059">
    <property type="entry name" value="Mannan-binding lectin serine protease 1"/>
    <property type="match status" value="1"/>
</dbReference>
<dbReference type="FunFam" id="2.10.70.10:FF:000016">
    <property type="entry name" value="Mannan-binding lectin serine protease 1"/>
    <property type="match status" value="1"/>
</dbReference>
<dbReference type="FunFam" id="2.60.120.290:FF:000006">
    <property type="entry name" value="Mannan-binding lectin serine protease 1"/>
    <property type="match status" value="1"/>
</dbReference>
<dbReference type="Gene3D" id="2.10.70.10">
    <property type="entry name" value="Complement Module, domain 1"/>
    <property type="match status" value="2"/>
</dbReference>
<dbReference type="Gene3D" id="2.10.25.10">
    <property type="entry name" value="Laminin"/>
    <property type="match status" value="1"/>
</dbReference>
<dbReference type="Gene3D" id="2.60.120.290">
    <property type="entry name" value="Spermadhesin, CUB domain"/>
    <property type="match status" value="2"/>
</dbReference>
<dbReference type="Gene3D" id="2.40.10.10">
    <property type="entry name" value="Trypsin-like serine proteases"/>
    <property type="match status" value="2"/>
</dbReference>
<dbReference type="InterPro" id="IPR000859">
    <property type="entry name" value="CUB_dom"/>
</dbReference>
<dbReference type="InterPro" id="IPR001881">
    <property type="entry name" value="EGF-like_Ca-bd_dom"/>
</dbReference>
<dbReference type="InterPro" id="IPR000152">
    <property type="entry name" value="EGF-type_Asp/Asn_hydroxyl_site"/>
</dbReference>
<dbReference type="InterPro" id="IPR018097">
    <property type="entry name" value="EGF_Ca-bd_CS"/>
</dbReference>
<dbReference type="InterPro" id="IPR024175">
    <property type="entry name" value="Pept_S1A_C1r/C1S/mannan-bd"/>
</dbReference>
<dbReference type="InterPro" id="IPR009003">
    <property type="entry name" value="Peptidase_S1_PA"/>
</dbReference>
<dbReference type="InterPro" id="IPR043504">
    <property type="entry name" value="Peptidase_S1_PA_chymotrypsin"/>
</dbReference>
<dbReference type="InterPro" id="IPR001314">
    <property type="entry name" value="Peptidase_S1A"/>
</dbReference>
<dbReference type="InterPro" id="IPR035914">
    <property type="entry name" value="Sperma_CUB_dom_sf"/>
</dbReference>
<dbReference type="InterPro" id="IPR035976">
    <property type="entry name" value="Sushi/SCR/CCP_sf"/>
</dbReference>
<dbReference type="InterPro" id="IPR000436">
    <property type="entry name" value="Sushi_SCR_CCP_dom"/>
</dbReference>
<dbReference type="InterPro" id="IPR001254">
    <property type="entry name" value="Trypsin_dom"/>
</dbReference>
<dbReference type="InterPro" id="IPR033116">
    <property type="entry name" value="TRYPSIN_SER"/>
</dbReference>
<dbReference type="PANTHER" id="PTHR24255:SF18">
    <property type="entry name" value="COMPLEMENT C1S SUBCOMPONENT"/>
    <property type="match status" value="1"/>
</dbReference>
<dbReference type="PANTHER" id="PTHR24255">
    <property type="entry name" value="COMPLEMENT COMPONENT 1, S SUBCOMPONENT-RELATED"/>
    <property type="match status" value="1"/>
</dbReference>
<dbReference type="Pfam" id="PF00431">
    <property type="entry name" value="CUB"/>
    <property type="match status" value="2"/>
</dbReference>
<dbReference type="Pfam" id="PF14670">
    <property type="entry name" value="FXa_inhibition"/>
    <property type="match status" value="1"/>
</dbReference>
<dbReference type="Pfam" id="PF00084">
    <property type="entry name" value="Sushi"/>
    <property type="match status" value="2"/>
</dbReference>
<dbReference type="Pfam" id="PF00089">
    <property type="entry name" value="Trypsin"/>
    <property type="match status" value="1"/>
</dbReference>
<dbReference type="PIRSF" id="PIRSF001155">
    <property type="entry name" value="C1r_C1s_MASP"/>
    <property type="match status" value="1"/>
</dbReference>
<dbReference type="PRINTS" id="PR00722">
    <property type="entry name" value="CHYMOTRYPSIN"/>
</dbReference>
<dbReference type="SMART" id="SM00032">
    <property type="entry name" value="CCP"/>
    <property type="match status" value="2"/>
</dbReference>
<dbReference type="SMART" id="SM00042">
    <property type="entry name" value="CUB"/>
    <property type="match status" value="2"/>
</dbReference>
<dbReference type="SMART" id="SM00179">
    <property type="entry name" value="EGF_CA"/>
    <property type="match status" value="1"/>
</dbReference>
<dbReference type="SMART" id="SM00020">
    <property type="entry name" value="Tryp_SPc"/>
    <property type="match status" value="1"/>
</dbReference>
<dbReference type="SUPFAM" id="SSF57535">
    <property type="entry name" value="Complement control module/SCR domain"/>
    <property type="match status" value="2"/>
</dbReference>
<dbReference type="SUPFAM" id="SSF57196">
    <property type="entry name" value="EGF/Laminin"/>
    <property type="match status" value="1"/>
</dbReference>
<dbReference type="SUPFAM" id="SSF49854">
    <property type="entry name" value="Spermadhesin, CUB domain"/>
    <property type="match status" value="2"/>
</dbReference>
<dbReference type="SUPFAM" id="SSF50494">
    <property type="entry name" value="Trypsin-like serine proteases"/>
    <property type="match status" value="1"/>
</dbReference>
<dbReference type="PROSITE" id="PS00010">
    <property type="entry name" value="ASX_HYDROXYL"/>
    <property type="match status" value="1"/>
</dbReference>
<dbReference type="PROSITE" id="PS01180">
    <property type="entry name" value="CUB"/>
    <property type="match status" value="2"/>
</dbReference>
<dbReference type="PROSITE" id="PS01187">
    <property type="entry name" value="EGF_CA"/>
    <property type="match status" value="1"/>
</dbReference>
<dbReference type="PROSITE" id="PS50923">
    <property type="entry name" value="SUSHI"/>
    <property type="match status" value="2"/>
</dbReference>
<dbReference type="PROSITE" id="PS50240">
    <property type="entry name" value="TRYPSIN_DOM"/>
    <property type="match status" value="1"/>
</dbReference>
<dbReference type="PROSITE" id="PS00135">
    <property type="entry name" value="TRYPSIN_SER"/>
    <property type="match status" value="1"/>
</dbReference>
<comment type="function">
    <text evidence="6 9 25 26 27 28 29 30 31 33 35">Component of the complement C1 complex, a multiprotein complex that initiates the classical pathway of the complement system, a cascade of proteins that leads to phagocytosis and breakdown of pathogens and signaling that strengthens the adaptive immune system (PubMed:11445589, PubMed:16169853, PubMed:417728, PubMed:467643, PubMed:6271784, PubMed:6282646, PubMed:6319179, PubMed:70787, PubMed:9422791). C1S is activated following association of the C1 complex with immunoglobulins (IgG or IgM) complexed with antigens to form antigen-antibody complexes on the surface of pathogens (PubMed:34155115). C1S is cleaved and activated by C1R to generate C1s subcomponent heavy and light chains (PubMed:11445589, PubMed:6271784). C1s subcomponent light chain then cleaves and activates C2 and C4, the next components of the classical complement pathway (PubMed:16169853, PubMed:467643, PubMed:6282646, PubMed:6319179, PubMed:6906228, PubMed:70787, PubMed:9422791).</text>
</comment>
<comment type="function">
    <molecule>Complement C1s subcomponent light chain</molecule>
    <text evidence="9 11 16 26 27 29 30 33 35">Serine protease component of the complement C1 complex, which catalyzes cleavage and activation of C2 and C4, the next components of the classical complement pathway (PubMed:16169853, PubMed:22949645, PubMed:417728, PubMed:467643, PubMed:6282646, PubMed:6319179, PubMed:70787, PubMed:9422791). Also able to cleave C1 inhibitor (SERPING1) in vitro; additional evidence is however required to confirm this result in vivo (PubMed:16169853). Also cleaves IGFBP5 and thereby inhibits the trophic effects of IGF1 (PubMed:18930415).</text>
</comment>
<comment type="catalytic activity">
    <molecule>Complement C1s subcomponent light chain</molecule>
    <reaction evidence="7 9 16 26 27 29 30 31 33 35">
        <text>Cleavage of Arg-|-Ala bond in complement component C4 to form C4a and C4b, and Lys(or Arg)-|-Lys bond in complement component C2 to form C2a and C2b: the 'classical' pathway C3 convertase.</text>
        <dbReference type="EC" id="3.4.21.42"/>
    </reaction>
</comment>
<comment type="activity regulation">
    <text evidence="6 7 28">Cleaved and activated by C1R (PubMed:11445589, PubMed:6271784). Immunoglobulin-binding promotes autoactivation of C1R, which results in the cleavage of the Arg-Ile bond in the catalytic domain (PubMed:11445589, PubMed:6271784). Inhibited by C1 inhibitor (SERPING1) (PubMed:11527969).</text>
</comment>
<comment type="biophysicochemical properties">
    <kinetics>
        <KM evidence="35">10 uM for complement component C2</KM>
        <KM evidence="7">12.3 uM for complement component C2 (at 37 degrees Celsius)</KM>
        <KM evidence="7">1.9 uM for complement component C4 (at 37 degrees Celsius)</KM>
        <text evidence="7 35">kcat is 7.4 sec(-1) for component C2. Less efficient than MASP2 in C4 cleavage.</text>
    </kinetics>
</comment>
<comment type="subunit">
    <text evidence="13 14 20 21 22 23 25 32">Core component of the complement C1 complex, a calcium-dependent complex composed of 1 molecule of the C1Q subcomplex, 2 molecules of C1R and 2 molecules of C1S (PubMed:19473974, PubMed:2007122, PubMed:28104818, PubMed:29311313, PubMed:2988513, PubMed:2989825, PubMed:34155115, PubMed:6952210). The C1Q subcomplex is composed 18 subunits: 3 chains of C1QA, C1QB, and C1QC trimerize to form 6 collagen-like triple helices connected to six globular ligand-recognition modules (PubMed:2988513, PubMed:6952210).</text>
</comment>
<comment type="interaction">
    <interactant intactId="EBI-2810045">
        <id>P09871</id>
    </interactant>
    <interactant intactId="EBI-3926504">
        <id>P00736</id>
        <label>C1R</label>
    </interactant>
    <organismsDiffer>false</organismsDiffer>
    <experiments>7</experiments>
</comment>
<comment type="interaction">
    <interactant intactId="EBI-2810045">
        <id>P09871</id>
    </interactant>
    <interactant intactId="EBI-2810045">
        <id>P09871</id>
        <label>C1S</label>
    </interactant>
    <organismsDiffer>false</organismsDiffer>
    <experiments>2</experiments>
</comment>
<comment type="interaction">
    <interactant intactId="EBI-2810045">
        <id>P09871</id>
    </interactant>
    <interactant intactId="EBI-2835920">
        <id>P06681</id>
        <label>C2</label>
    </interactant>
    <organismsDiffer>false</organismsDiffer>
    <experiments>3</experiments>
</comment>
<comment type="interaction">
    <interactant intactId="EBI-2810045">
        <id>P09871</id>
    </interactant>
    <interactant intactId="EBI-625022">
        <id>O43889-2</id>
        <label>CREB3</label>
    </interactant>
    <organismsDiffer>false</organismsDiffer>
    <experiments>3</experiments>
</comment>
<comment type="interaction">
    <interactant intactId="EBI-2810045">
        <id>P09871</id>
    </interactant>
    <interactant intactId="EBI-7545592">
        <id>Q9H6H4</id>
        <label>REEP4</label>
    </interactant>
    <organismsDiffer>false</organismsDiffer>
    <experiments>3</experiments>
</comment>
<comment type="interaction">
    <interactant intactId="EBI-2810045">
        <id>P09871</id>
    </interactant>
    <interactant intactId="EBI-1223454">
        <id>P05155</id>
        <label>SERPING1</label>
    </interactant>
    <organismsDiffer>false</organismsDiffer>
    <experiments>5</experiments>
</comment>
<comment type="subcellular location">
    <subcellularLocation>
        <location evidence="24">Secreted</location>
    </subcellularLocation>
    <subcellularLocation>
        <location evidence="25">Cell surface</location>
    </subcellularLocation>
    <text evidence="25">Recruited to the surface of pathogens by the C1Q subcomplex.</text>
</comment>
<comment type="PTM">
    <text evidence="6 28">Cleaved and activated by C1R to generate Complement C1s subcomponent heavy and light chains.</text>
</comment>
<comment type="PTM">
    <text evidence="15">The iron and 2-oxoglutarate dependent 3-hydroxylation of aspartate and asparagine is (R) stereospecific within EGF domains.</text>
</comment>
<comment type="disease" evidence="5">
    <disease id="DI-02293">
        <name>Complement component C1s deficiency</name>
        <acronym>C1SD</acronym>
        <description>A rare defect resulting in C1 deficiency and impaired activation of the complement classical pathway. C1 deficiency generally leads to severe immune complex disease with features of systemic lupus erythematosus and glomerulonephritis.</description>
        <dbReference type="MIM" id="613783"/>
    </disease>
    <text>The disease is caused by variants affecting the gene represented in this entry.</text>
</comment>
<comment type="disease" evidence="19">
    <disease id="DI-04849">
        <name>Ehlers-Danlos syndrome, periodontal type, 2</name>
        <acronym>EDSPD2</acronym>
        <description>A form of Ehlers-Danlos syndrome, a connective tissue disorder characterized by hyperextensible skin, atrophic cutaneous scars due to tissue fragility and joint hyperlaxity. EDSPD2 is characterized by the association of typical features of Ehlers-Danlos syndrome with gingival recession and severe early-onset periodontal disease, leading to premature loss of permanent teeth. EDSPD2 transmission pattern is consistent with autosomal dominant inheritance.</description>
        <dbReference type="MIM" id="617174"/>
    </disease>
    <text>The disease is caused by variants affecting the gene represented in this entry.</text>
</comment>
<comment type="similarity">
    <text evidence="2">Belongs to the peptidase S1 family.</text>
</comment>
<comment type="online information" name="C1S">
    <link uri="https://databases.lovd.nl/shared/genes/C1S"/>
    <text>complement component 1, s subcomponent</text>
</comment>
<feature type="signal peptide" evidence="24">
    <location>
        <begin position="1"/>
        <end position="15"/>
    </location>
</feature>
<feature type="chain" id="PRO_0000027586" description="Complement C1s subcomponent">
    <location>
        <begin position="16"/>
        <end position="688"/>
    </location>
</feature>
<feature type="chain" id="PRO_0000027587" description="Complement C1s subcomponent heavy chain">
    <location>
        <begin position="16"/>
        <end position="437"/>
    </location>
</feature>
<feature type="chain" id="PRO_0000027588" description="Complement C1s subcomponent light chain" evidence="39">
    <location>
        <begin position="438"/>
        <end position="688"/>
    </location>
</feature>
<feature type="domain" description="CUB 1" evidence="1">
    <location>
        <begin position="16"/>
        <end position="130"/>
    </location>
</feature>
<feature type="domain" description="EGF-like; calcium-binding">
    <location>
        <begin position="131"/>
        <end position="172"/>
    </location>
</feature>
<feature type="domain" description="CUB 2" evidence="1">
    <location>
        <begin position="175"/>
        <end position="290"/>
    </location>
</feature>
<feature type="domain" description="Sushi 1" evidence="3">
    <location>
        <begin position="292"/>
        <end position="356"/>
    </location>
</feature>
<feature type="domain" description="Sushi 2" evidence="3">
    <location>
        <begin position="357"/>
        <end position="423"/>
    </location>
</feature>
<feature type="domain" description="Peptidase S1" evidence="2">
    <location>
        <begin position="438"/>
        <end position="680"/>
    </location>
</feature>
<feature type="active site" description="Charge relay system" evidence="4">
    <location>
        <position position="475"/>
    </location>
</feature>
<feature type="active site" description="Charge relay system" evidence="4">
    <location>
        <position position="529"/>
    </location>
</feature>
<feature type="active site" description="Charge relay system" evidence="4">
    <location>
        <position position="632"/>
    </location>
</feature>
<feature type="binding site" evidence="8 18 21 41">
    <location>
        <position position="60"/>
    </location>
    <ligand>
        <name>Ca(2+)</name>
        <dbReference type="ChEBI" id="CHEBI:29108"/>
        <label>1</label>
    </ligand>
</feature>
<feature type="binding site" evidence="8 18 21 41">
    <location>
        <position position="68"/>
    </location>
    <ligand>
        <name>Ca(2+)</name>
        <dbReference type="ChEBI" id="CHEBI:29108"/>
        <label>1</label>
    </ligand>
</feature>
<feature type="binding site" evidence="8 18 21 41">
    <location>
        <position position="113"/>
    </location>
    <ligand>
        <name>Ca(2+)</name>
        <dbReference type="ChEBI" id="CHEBI:29108"/>
        <label>1</label>
    </ligand>
</feature>
<feature type="binding site" evidence="8 18 21 41">
    <location>
        <position position="131"/>
    </location>
    <ligand>
        <name>Ca(2+)</name>
        <dbReference type="ChEBI" id="CHEBI:29108"/>
        <label>2</label>
    </ligand>
</feature>
<feature type="binding site" evidence="8 18 21 41">
    <location>
        <position position="132"/>
    </location>
    <ligand>
        <name>Ca(2+)</name>
        <dbReference type="ChEBI" id="CHEBI:29108"/>
        <label>2</label>
    </ligand>
</feature>
<feature type="binding site" evidence="8 18 21 41">
    <location>
        <position position="134"/>
    </location>
    <ligand>
        <name>Ca(2+)</name>
        <dbReference type="ChEBI" id="CHEBI:29108"/>
        <label>2</label>
    </ligand>
</feature>
<feature type="binding site" evidence="8 18 21 41">
    <location>
        <position position="149"/>
    </location>
    <ligand>
        <name>Ca(2+)</name>
        <dbReference type="ChEBI" id="CHEBI:29108"/>
        <label>2</label>
    </ligand>
</feature>
<feature type="binding site" evidence="8 18 21 41">
    <location>
        <position position="150"/>
    </location>
    <ligand>
        <name>Ca(2+)</name>
        <dbReference type="ChEBI" id="CHEBI:29108"/>
        <label>2</label>
    </ligand>
</feature>
<feature type="binding site" evidence="8 18 21 41">
    <location>
        <position position="153"/>
    </location>
    <ligand>
        <name>Ca(2+)</name>
        <dbReference type="ChEBI" id="CHEBI:29108"/>
        <label>2</label>
    </ligand>
</feature>
<feature type="binding site" evidence="18 21 47 48">
    <location>
        <position position="226"/>
    </location>
    <ligand>
        <name>Ca(2+)</name>
        <dbReference type="ChEBI" id="CHEBI:29108"/>
        <label>3</label>
    </ligand>
</feature>
<feature type="binding site" evidence="18 21 47 48">
    <location>
        <position position="236"/>
    </location>
    <ligand>
        <name>Ca(2+)</name>
        <dbReference type="ChEBI" id="CHEBI:29108"/>
        <label>3</label>
    </ligand>
</feature>
<feature type="binding site" evidence="18 21 47 48">
    <location>
        <position position="275"/>
    </location>
    <ligand>
        <name>Ca(2+)</name>
        <dbReference type="ChEBI" id="CHEBI:29108"/>
        <label>3</label>
    </ligand>
</feature>
<feature type="binding site" evidence="18 21 48">
    <location>
        <position position="278"/>
    </location>
    <ligand>
        <name>Ca(2+)</name>
        <dbReference type="ChEBI" id="CHEBI:29108"/>
        <label>3</label>
    </ligand>
</feature>
<feature type="binding site" evidence="21 47 48">
    <location>
        <position position="279"/>
    </location>
    <ligand>
        <name>Ca(2+)</name>
        <dbReference type="ChEBI" id="CHEBI:29108"/>
        <label>3</label>
    </ligand>
</feature>
<feature type="site" description="Cleavage; by C1R" evidence="34">
    <location>
        <begin position="437"/>
        <end position="438"/>
    </location>
</feature>
<feature type="modified residue" description="(3R)-3-hydroxyasparagine" evidence="15">
    <location>
        <position position="149"/>
    </location>
</feature>
<feature type="glycosylation site" description="N-linked (GlcNAc...) asparagine" evidence="12 15 18">
    <location>
        <position position="174"/>
    </location>
</feature>
<feature type="glycosylation site" description="N-linked (GlcNAc...) asparagine" evidence="8 10 12">
    <location>
        <position position="406"/>
    </location>
</feature>
<feature type="disulfide bond" evidence="14 21 47 48">
    <location>
        <begin position="65"/>
        <end position="83"/>
    </location>
</feature>
<feature type="disulfide bond" evidence="14 21 47 48">
    <location>
        <begin position="135"/>
        <end position="147"/>
    </location>
</feature>
<feature type="disulfide bond" evidence="14 21 47 48">
    <location>
        <begin position="143"/>
        <end position="156"/>
    </location>
</feature>
<feature type="disulfide bond" evidence="14 21 47 48">
    <location>
        <begin position="158"/>
        <end position="171"/>
    </location>
</feature>
<feature type="disulfide bond" evidence="14 21 47 48">
    <location>
        <begin position="175"/>
        <end position="202"/>
    </location>
</feature>
<feature type="disulfide bond" evidence="14 21 47 48">
    <location>
        <begin position="234"/>
        <end position="251"/>
    </location>
</feature>
<feature type="disulfide bond" evidence="14 17 42">
    <location>
        <begin position="294"/>
        <end position="341"/>
    </location>
</feature>
<feature type="disulfide bond" evidence="14 17 42">
    <location>
        <begin position="321"/>
        <end position="354"/>
    </location>
</feature>
<feature type="disulfide bond" evidence="14 17 42">
    <location>
        <begin position="359"/>
        <end position="403"/>
    </location>
</feature>
<feature type="disulfide bond" evidence="14 17 42">
    <location>
        <begin position="386"/>
        <end position="421"/>
    </location>
</feature>
<feature type="disulfide bond" description="Interchain (between heavy and light chains)" evidence="1 2 3 14 17 42">
    <location>
        <begin position="425"/>
        <end position="549"/>
    </location>
</feature>
<feature type="disulfide bond" evidence="14 17 42">
    <location>
        <begin position="595"/>
        <end position="618"/>
    </location>
</feature>
<feature type="disulfide bond" evidence="14 17 42">
    <location>
        <begin position="628"/>
        <end position="659"/>
    </location>
</feature>
<feature type="sequence variant" id="VAR_033643" description="In dbSNP:rs12146727.">
    <original>R</original>
    <variation>H</variation>
    <location>
        <position position="119"/>
    </location>
</feature>
<feature type="sequence variant" id="VAR_077120" description="In EDSPD2; dbSNP:rs886040975." evidence="19">
    <original>C</original>
    <variation>R</variation>
    <location>
        <position position="294"/>
    </location>
</feature>
<feature type="sequence variant" id="VAR_077121" description="In EDSPD2; uncertain significance." evidence="19">
    <location>
        <position position="316"/>
    </location>
</feature>
<feature type="sequence variant" id="VAR_033644" description="In dbSNP:rs2239170.">
    <original>V</original>
    <variation>L</variation>
    <location>
        <position position="327"/>
    </location>
</feature>
<feature type="sequence variant" id="VAR_014565" description="In dbSNP:rs20573.">
    <original>R</original>
    <variation>H</variation>
    <location>
        <position position="383"/>
    </location>
</feature>
<feature type="mutagenesis site" description="Does not affect association with the C1Q subcomplex." evidence="13">
    <original>E</original>
    <variation>A</variation>
    <location>
        <position position="35"/>
    </location>
</feature>
<feature type="mutagenesis site" description="Slightly decreased association with the C1Q subcomplex." evidence="13">
    <original>E</original>
    <variation>A</variation>
    <location>
        <position position="60"/>
    </location>
</feature>
<feature type="mutagenesis site" description="Does not affect association with the C1Q subcomplex." evidence="13">
    <original>E</original>
    <variation>A</variation>
    <location>
        <position position="63"/>
    </location>
</feature>
<feature type="mutagenesis site" description="Does not affect association with the C1Q subcomplex." evidence="13">
    <original>Y</original>
    <variation>A</variation>
    <location>
        <position position="67"/>
    </location>
</feature>
<feature type="mutagenesis site" description="Slightly decreased association with the C1Q subcomplex." evidence="13">
    <original>D</original>
    <variation>A</variation>
    <location>
        <position position="113"/>
    </location>
</feature>
<feature type="mutagenesis site" description="Does not affect association with the C1Q subcomplex." evidence="13">
    <original>E</original>
    <variation>A</variation>
    <location>
        <position position="226"/>
    </location>
</feature>
<feature type="mutagenesis site" description="Does not affect association with the C1Q subcomplex." evidence="13">
    <original>D</original>
    <variation>A</variation>
    <location>
        <position position="275"/>
    </location>
</feature>
<feature type="sequence conflict" description="In Ref. 8; AA sequence." evidence="38" ref="8">
    <original>C</original>
    <variation>K</variation>
    <location>
        <position position="294"/>
    </location>
</feature>
<feature type="sequence conflict" description="In Ref. 9; AA sequence." evidence="38" ref="9">
    <original>T</original>
    <variation>A</variation>
    <location>
        <position position="573"/>
    </location>
</feature>
<feature type="sequence conflict" description="In Ref. 9; AA sequence." evidence="38" ref="9">
    <original>TK</original>
    <variation>GR</variation>
    <location>
        <begin position="645"/>
        <end position="646"/>
    </location>
</feature>
<feature type="strand" evidence="50">
    <location>
        <begin position="19"/>
        <end position="24"/>
    </location>
</feature>
<feature type="turn" evidence="50">
    <location>
        <begin position="26"/>
        <end position="29"/>
    </location>
</feature>
<feature type="strand" evidence="50">
    <location>
        <begin position="34"/>
        <end position="43"/>
    </location>
</feature>
<feature type="strand" evidence="50">
    <location>
        <begin position="48"/>
        <end position="58"/>
    </location>
</feature>
<feature type="helix" evidence="50">
    <location>
        <begin position="63"/>
        <end position="65"/>
    </location>
</feature>
<feature type="strand" evidence="50">
    <location>
        <begin position="67"/>
        <end position="73"/>
    </location>
</feature>
<feature type="strand" evidence="50">
    <location>
        <begin position="75"/>
        <end position="77"/>
    </location>
</feature>
<feature type="strand" evidence="50">
    <location>
        <begin position="80"/>
        <end position="82"/>
    </location>
</feature>
<feature type="strand" evidence="50">
    <location>
        <begin position="84"/>
        <end position="86"/>
    </location>
</feature>
<feature type="strand" evidence="50">
    <location>
        <begin position="96"/>
        <end position="112"/>
    </location>
</feature>
<feature type="strand" evidence="50">
    <location>
        <begin position="122"/>
        <end position="131"/>
    </location>
</feature>
<feature type="turn" evidence="50">
    <location>
        <begin position="134"/>
        <end position="136"/>
    </location>
</feature>
<feature type="strand" evidence="52">
    <location>
        <begin position="137"/>
        <end position="140"/>
    </location>
</feature>
<feature type="strand" evidence="50">
    <location>
        <begin position="143"/>
        <end position="150"/>
    </location>
</feature>
<feature type="strand" evidence="50">
    <location>
        <begin position="153"/>
        <end position="157"/>
    </location>
</feature>
<feature type="strand" evidence="52">
    <location>
        <begin position="162"/>
        <end position="164"/>
    </location>
</feature>
<feature type="strand" evidence="52">
    <location>
        <begin position="171"/>
        <end position="173"/>
    </location>
</feature>
<feature type="strand" evidence="53">
    <location>
        <begin position="176"/>
        <end position="180"/>
    </location>
</feature>
<feature type="strand" evidence="53">
    <location>
        <begin position="182"/>
        <end position="188"/>
    </location>
</feature>
<feature type="turn" evidence="53">
    <location>
        <begin position="190"/>
        <end position="193"/>
    </location>
</feature>
<feature type="strand" evidence="53">
    <location>
        <begin position="201"/>
        <end position="207"/>
    </location>
</feature>
<feature type="strand" evidence="53">
    <location>
        <begin position="212"/>
        <end position="217"/>
    </location>
</feature>
<feature type="helix" evidence="53">
    <location>
        <begin position="220"/>
        <end position="222"/>
    </location>
</feature>
<feature type="strand" evidence="53">
    <location>
        <begin position="223"/>
        <end position="225"/>
    </location>
</feature>
<feature type="strand" evidence="53">
    <location>
        <begin position="235"/>
        <end position="242"/>
    </location>
</feature>
<feature type="strand" evidence="53">
    <location>
        <begin position="245"/>
        <end position="250"/>
    </location>
</feature>
<feature type="strand" evidence="53">
    <location>
        <begin position="252"/>
        <end position="254"/>
    </location>
</feature>
<feature type="strand" evidence="53">
    <location>
        <begin position="259"/>
        <end position="262"/>
    </location>
</feature>
<feature type="strand" evidence="53">
    <location>
        <begin position="265"/>
        <end position="273"/>
    </location>
</feature>
<feature type="strand" evidence="53">
    <location>
        <begin position="282"/>
        <end position="291"/>
    </location>
</feature>
<feature type="strand" evidence="53">
    <location>
        <begin position="300"/>
        <end position="306"/>
    </location>
</feature>
<feature type="strand" evidence="51">
    <location>
        <begin position="309"/>
        <end position="312"/>
    </location>
</feature>
<feature type="strand" evidence="53">
    <location>
        <begin position="316"/>
        <end position="321"/>
    </location>
</feature>
<feature type="strand" evidence="53">
    <location>
        <begin position="325"/>
        <end position="331"/>
    </location>
</feature>
<feature type="strand" evidence="53">
    <location>
        <begin position="334"/>
        <end position="341"/>
    </location>
</feature>
<feature type="turn" evidence="53">
    <location>
        <begin position="348"/>
        <end position="351"/>
    </location>
</feature>
<feature type="strand" evidence="53">
    <location>
        <begin position="353"/>
        <end position="356"/>
    </location>
</feature>
<feature type="strand" evidence="49">
    <location>
        <begin position="368"/>
        <end position="370"/>
    </location>
</feature>
<feature type="strand" evidence="49">
    <location>
        <begin position="381"/>
        <end position="386"/>
    </location>
</feature>
<feature type="turn" evidence="49">
    <location>
        <begin position="388"/>
        <end position="390"/>
    </location>
</feature>
<feature type="strand" evidence="49">
    <location>
        <begin position="391"/>
        <end position="393"/>
    </location>
</feature>
<feature type="strand" evidence="54">
    <location>
        <begin position="395"/>
        <end position="397"/>
    </location>
</feature>
<feature type="strand" evidence="49">
    <location>
        <begin position="399"/>
        <end position="403"/>
    </location>
</feature>
<feature type="turn" evidence="54">
    <location>
        <begin position="405"/>
        <end position="407"/>
    </location>
</feature>
<feature type="strand" evidence="49">
    <location>
        <begin position="409"/>
        <end position="411"/>
    </location>
</feature>
<feature type="turn" evidence="49">
    <location>
        <begin position="412"/>
        <end position="414"/>
    </location>
</feature>
<feature type="strand" evidence="49">
    <location>
        <begin position="421"/>
        <end position="423"/>
    </location>
</feature>
<feature type="helix" evidence="49">
    <location>
        <begin position="446"/>
        <end position="448"/>
    </location>
</feature>
<feature type="strand" evidence="49">
    <location>
        <begin position="452"/>
        <end position="455"/>
    </location>
</feature>
<feature type="turn" evidence="49">
    <location>
        <begin position="456"/>
        <end position="459"/>
    </location>
</feature>
<feature type="strand" evidence="49">
    <location>
        <begin position="460"/>
        <end position="466"/>
    </location>
</feature>
<feature type="strand" evidence="49">
    <location>
        <begin position="469"/>
        <end position="472"/>
    </location>
</feature>
<feature type="helix" evidence="49">
    <location>
        <begin position="474"/>
        <end position="477"/>
    </location>
</feature>
<feature type="strand" evidence="56">
    <location>
        <begin position="485"/>
        <end position="488"/>
    </location>
</feature>
<feature type="strand" evidence="51">
    <location>
        <begin position="490"/>
        <end position="492"/>
    </location>
</feature>
<feature type="helix" evidence="55">
    <location>
        <begin position="495"/>
        <end position="497"/>
    </location>
</feature>
<feature type="strand" evidence="56">
    <location>
        <begin position="501"/>
        <end position="503"/>
    </location>
</feature>
<feature type="strand" evidence="49">
    <location>
        <begin position="505"/>
        <end position="510"/>
    </location>
</feature>
<feature type="helix" evidence="51">
    <location>
        <begin position="520"/>
        <end position="522"/>
    </location>
</feature>
<feature type="strand" evidence="49">
    <location>
        <begin position="531"/>
        <end position="537"/>
    </location>
</feature>
<feature type="helix" evidence="49">
    <location>
        <begin position="555"/>
        <end position="557"/>
    </location>
</feature>
<feature type="strand" evidence="49">
    <location>
        <begin position="564"/>
        <end position="570"/>
    </location>
</feature>
<feature type="strand" evidence="51">
    <location>
        <begin position="576"/>
        <end position="578"/>
    </location>
</feature>
<feature type="strand" evidence="49">
    <location>
        <begin position="583"/>
        <end position="590"/>
    </location>
</feature>
<feature type="helix" evidence="49">
    <location>
        <begin position="592"/>
        <end position="596"/>
    </location>
</feature>
<feature type="strand" evidence="49">
    <location>
        <begin position="616"/>
        <end position="620"/>
    </location>
</feature>
<feature type="helix" evidence="51">
    <location>
        <begin position="627"/>
        <end position="629"/>
    </location>
</feature>
<feature type="strand" evidence="49">
    <location>
        <begin position="635"/>
        <end position="639"/>
    </location>
</feature>
<feature type="strand" evidence="49">
    <location>
        <begin position="647"/>
        <end position="655"/>
    </location>
</feature>
<feature type="strand" evidence="49">
    <location>
        <begin position="661"/>
        <end position="667"/>
    </location>
</feature>
<feature type="helix" evidence="49">
    <location>
        <begin position="668"/>
        <end position="671"/>
    </location>
</feature>
<feature type="helix" evidence="49">
    <location>
        <begin position="672"/>
        <end position="681"/>
    </location>
</feature>
<reference key="1">
    <citation type="journal article" date="1987" name="Eur. J. Biochem.">
        <title>Molecular cloning of cDNA for human complement component C1s. The complete amino acid sequence.</title>
        <authorList>
            <person name="McKinnon C.M."/>
            <person name="Carter P.E."/>
            <person name="Smyth S.J."/>
            <person name="Dunbar B."/>
            <person name="Fothergill J.E."/>
        </authorList>
    </citation>
    <scope>NUCLEOTIDE SEQUENCE [MRNA]</scope>
    <source>
        <tissue>Liver</tissue>
    </source>
</reference>
<reference key="2">
    <citation type="journal article" date="1987" name="Biochemistry">
        <title>Complete cDNA sequence of human complement Cls and close physical linkage of the homologous genes Cls and Clr.</title>
        <authorList>
            <person name="Tosi M."/>
            <person name="Duponchel C."/>
            <person name="Meo T."/>
            <person name="Julier C."/>
        </authorList>
    </citation>
    <scope>NUCLEOTIDE SEQUENCE [MRNA]</scope>
</reference>
<reference key="3">
    <citation type="journal article" date="1988" name="Proc. Natl. Acad. Sci. U.S.A.">
        <title>Human genes for complement components C1r and C1s in a close tail-to-tail arrangement.</title>
        <authorList>
            <person name="Kusumoto H."/>
            <person name="Hirosawa S."/>
            <person name="Salier J.-P."/>
            <person name="Hagen F.S."/>
            <person name="Kurachi K."/>
        </authorList>
    </citation>
    <scope>NUCLEOTIDE SEQUENCE [MRNA]</scope>
</reference>
<reference key="4">
    <citation type="submission" date="2005-09" db="EMBL/GenBank/DDBJ databases">
        <authorList>
            <person name="Mural R.J."/>
            <person name="Istrail S."/>
            <person name="Sutton G.G."/>
            <person name="Florea L."/>
            <person name="Halpern A.L."/>
            <person name="Mobarry C.M."/>
            <person name="Lippert R."/>
            <person name="Walenz B."/>
            <person name="Shatkay H."/>
            <person name="Dew I."/>
            <person name="Miller J.R."/>
            <person name="Flanigan M.J."/>
            <person name="Edwards N.J."/>
            <person name="Bolanos R."/>
            <person name="Fasulo D."/>
            <person name="Halldorsson B.V."/>
            <person name="Hannenhalli S."/>
            <person name="Turner R."/>
            <person name="Yooseph S."/>
            <person name="Lu F."/>
            <person name="Nusskern D.R."/>
            <person name="Shue B.C."/>
            <person name="Zheng X.H."/>
            <person name="Zhong F."/>
            <person name="Delcher A.L."/>
            <person name="Huson D.H."/>
            <person name="Kravitz S.A."/>
            <person name="Mouchard L."/>
            <person name="Reinert K."/>
            <person name="Remington K.A."/>
            <person name="Clark A.G."/>
            <person name="Waterman M.S."/>
            <person name="Eichler E.E."/>
            <person name="Adams M.D."/>
            <person name="Hunkapiller M.W."/>
            <person name="Myers E.W."/>
            <person name="Venter J.C."/>
        </authorList>
    </citation>
    <scope>NUCLEOTIDE SEQUENCE [LARGE SCALE GENOMIC DNA]</scope>
</reference>
<reference key="5">
    <citation type="journal article" date="2004" name="Genome Res.">
        <title>The status, quality, and expansion of the NIH full-length cDNA project: the Mammalian Gene Collection (MGC).</title>
        <authorList>
            <consortium name="The MGC Project Team"/>
        </authorList>
    </citation>
    <scope>NUCLEOTIDE SEQUENCE [LARGE SCALE MRNA]</scope>
    <source>
        <tissue>PNS</tissue>
    </source>
</reference>
<reference key="6">
    <citation type="journal article" date="1998" name="J. Immunol.">
        <title>Two lineages of mannose-binding lectin-associated serine protease (MASP) in vertebrates.</title>
        <authorList>
            <person name="Endo Y."/>
            <person name="Takahashi M."/>
            <person name="Nakao M."/>
            <person name="Saiga H."/>
            <person name="Sekine H."/>
            <person name="Matsushita M."/>
            <person name="Nonaka M."/>
            <person name="Fujita T."/>
        </authorList>
    </citation>
    <scope>NUCLEOTIDE SEQUENCE [GENOMIC DNA] OF 1-329</scope>
    <source>
        <tissue>Peripheral blood leukocyte</tissue>
    </source>
</reference>
<reference key="7">
    <citation type="journal article" date="1989" name="J. Mol. Biol.">
        <title>Complement genes C1r and C1s feature an intronless serine protease domain closely related to haptoglobin.</title>
        <authorList>
            <person name="Tosi M."/>
            <person name="Duponchel C."/>
            <person name="Meo T."/>
            <person name="Couture-Tosi E."/>
        </authorList>
    </citation>
    <scope>NUCLEOTIDE SEQUENCE OF 291-688</scope>
</reference>
<reference key="8">
    <citation type="journal article" date="1986" name="Eur. J. Biochem.">
        <title>Human complement component C1s. Partial sequence determination of the heavy chain and identification of the peptide bond cleaved during activation.</title>
        <authorList>
            <person name="Spycher S.E."/>
            <person name="Nick H."/>
            <person name="Rickli E.E."/>
        </authorList>
    </citation>
    <scope>PROTEIN SEQUENCE OF 16-61; 168-219; 287-334 AND 384-445</scope>
    <scope>SUBCELLULAR LOCATION</scope>
</reference>
<reference key="9">
    <citation type="journal article" date="1983" name="Biochem. J.">
        <title>The serine proteinase chain of human complement component C1s. Cyanogen bromide cleavage and N-terminal sequences of the fragments.</title>
        <authorList>
            <person name="Carter P.E."/>
            <person name="Dunbar B."/>
            <person name="Fothergill J.E."/>
        </authorList>
    </citation>
    <scope>PROTEIN SEQUENCE OF 438-500; 503-534; 542-601; 617-623 AND 626-656</scope>
</reference>
<reference key="10">
    <citation type="journal article" date="1977" name="Biochem. J.">
        <title>The structure and enzymic activities of the C1r and C1s subcomponents of C1, the first component of human serum complement.</title>
        <authorList>
            <person name="Sim R.B."/>
            <person name="Porter R.R."/>
            <person name="Reid K.B."/>
            <person name="Gigli I."/>
        </authorList>
    </citation>
    <scope>PROTEIN SEQUENCE OF 438-457</scope>
</reference>
<reference key="11">
    <citation type="journal article" date="1990" name="Biochemistry">
        <title>Chemical and functional characterization of a fragment of C1-s containing the epidermal growth factor homology region.</title>
        <authorList>
            <person name="Thielens N.M."/>
            <person name="van Dorsselaer A."/>
            <person name="Gagnon J."/>
            <person name="Arlaud G.J."/>
        </authorList>
    </citation>
    <scope>PARTIAL PROTEIN SEQUENCE</scope>
    <scope>GLYCOSYLATION AT ASN-174</scope>
    <scope>HYDROXYLATION AT ASN-149</scope>
</reference>
<reference key="12">
    <citation type="journal article" date="1991" name="Biochemistry">
        <title>Effect of lactoperoxidase-catalyzed iodination on the Ca(2+)-dependent interactions of human C1s. Location of the iodination sites.</title>
        <authorList>
            <person name="Illy C."/>
            <person name="Thielens N.M."/>
            <person name="Gagnon J."/>
            <person name="Arlaud G.J."/>
        </authorList>
    </citation>
    <scope>PARTIAL PROTEIN SEQUENCE</scope>
    <source>
        <tissue>Plasma</tissue>
    </source>
</reference>
<reference key="13">
    <citation type="journal article" date="1977" name="Proc. Natl. Acad. Sci. U.S.A.">
        <title>Cleavage of C2 by C1s into the antigenically distinct fragments C2a and C2b: demonstration of binding of C2b to C4b.</title>
        <authorList>
            <person name="Nagasawa S."/>
            <person name="Stroud R.M."/>
        </authorList>
    </citation>
    <scope>FUNCTION</scope>
    <scope>CATALYTIC ACTIVITY</scope>
</reference>
<reference key="14">
    <citation type="journal article" date="1978" name="Biochem. J.">
        <title>The purification and properties of the second component of human complement.</title>
        <authorList>
            <person name="Kerr M.A."/>
            <person name="Porter R.R."/>
        </authorList>
    </citation>
    <scope>FUNCTION</scope>
    <scope>CATALYTIC ACTIVITY</scope>
</reference>
<reference key="15">
    <citation type="journal article" date="1979" name="FEBS Lett.">
        <title>Purification of human complement subcomponent C4. C4 cleavage by C1s.</title>
        <authorList>
            <person name="Reboul A."/>
            <person name="Thielens N."/>
            <person name="Villiers M.B."/>
            <person name="Colomb M.G."/>
        </authorList>
    </citation>
    <scope>FUNCTION</scope>
    <scope>CATALYTIC ACTIVITY</scope>
</reference>
<reference key="16">
    <citation type="journal article" date="1980" name="Biochem. J.">
        <title>The human complement system: assembly of the classical pathway C3 convertase.</title>
        <authorList>
            <person name="Kerr M.A."/>
        </authorList>
    </citation>
    <scope>FUNCTION</scope>
    <scope>CATALYTIC ACTIVITY</scope>
</reference>
<reference key="17">
    <citation type="journal article" date="1981" name="J. Biol. Chem.">
        <title>Mapping the substrate binding site of human C1r and C1s with peptide thioesters. Development of new sensitive substrates.</title>
        <authorList>
            <person name="McRae B.J."/>
            <person name="Lin T.Y."/>
            <person name="Powers J.C."/>
        </authorList>
    </citation>
    <scope>FUNCTION</scope>
    <scope>ACTIVITY REGULATION</scope>
    <scope>PROTEOLYTIC CLEAVAGE</scope>
</reference>
<reference key="18">
    <citation type="journal article" date="1982" name="FEBS Lett.">
        <title>Human complement subcomponent C2: purification and proteolytic cleavage in fluid phase by C1s, C1r2-C1s2 and C1.</title>
        <authorList>
            <person name="Thielens N.M."/>
            <person name="Villiers M.B."/>
            <person name="Reboul A."/>
            <person name="Villiers C.L."/>
            <person name="Colomb M.G."/>
        </authorList>
    </citation>
    <scope>FUNCTION</scope>
    <scope>CATALYTIC ACTIVITY</scope>
</reference>
<reference key="19">
    <citation type="journal article" date="1982" name="Proc. Natl. Acad. Sci. U.S.A.">
        <title>Ultrastructure of the first component of human complement: electron microscopy of the crosslinked complex.</title>
        <authorList>
            <person name="Strang C.J."/>
            <person name="Siegel R.C."/>
            <person name="Phillips M.L."/>
            <person name="Poon P.H."/>
            <person name="Schumaker V.N."/>
        </authorList>
    </citation>
    <scope>SUBUNIT</scope>
</reference>
<reference key="20">
    <citation type="journal article" date="1984" name="FEBS Lett.">
        <title>Comparative study of the fluid-phase proteolytic cleavage of human complement subcomponents C4 and C2 by C1s and C1r2-C1s2.</title>
        <authorList>
            <person name="Thielens N.M."/>
            <person name="Villiers C.L."/>
            <person name="Villiers M.B."/>
            <person name="Colomb M.G."/>
        </authorList>
    </citation>
    <scope>FUNCTION</scope>
    <scope>CATALYTIC ACTIVITY</scope>
</reference>
<reference key="21">
    <citation type="journal article" date="1985" name="Biochem. J.">
        <title>Molecular modelling of human complement subcomponent C1q and its complex with C1r2C1s2 derived from neutron-scattering curves and hydrodynamic properties.</title>
        <authorList>
            <person name="Perkins S.J."/>
        </authorList>
    </citation>
    <scope>SUBUNIT</scope>
</reference>
<reference key="22">
    <citation type="journal article" date="1985" name="Proc. Natl. Acad. Sci. U.S.A.">
        <title>Domain structure and associated functions of subcomponents C1r and C1s of the first component of human complement.</title>
        <authorList>
            <person name="Villiers C.L."/>
            <person name="Arlaud G.J."/>
            <person name="Colomb M.G."/>
        </authorList>
    </citation>
    <scope>SUBUNIT</scope>
</reference>
<reference key="23">
    <citation type="journal article" date="1991" name="Biochemistry">
        <title>Identification of the disulfide bonds of human complement C1s.</title>
        <authorList>
            <person name="Hess D."/>
            <person name="Schaller J."/>
            <person name="Rickli E.E."/>
        </authorList>
    </citation>
    <scope>DISULFIDE BONDS</scope>
</reference>
<reference key="24">
    <citation type="journal article" date="1995" name="Biochemistry">
        <title>Structure of the catalytic region of human complement protease C1s: study by chemical cross-linking and three-dimensional homology modeling.</title>
        <authorList>
            <person name="Rossi V."/>
            <person name="Gaboriaud C."/>
            <person name="Lacroix M."/>
            <person name="Ulrich J."/>
            <person name="Fontecilla-Camps J.-C."/>
            <person name="Gagnon J."/>
            <person name="Arlaud G.J."/>
        </authorList>
    </citation>
    <scope>PARTIAL PROTEIN SEQUENCE</scope>
    <scope>3D-STRUCTURE MODELING OF CATALYTIC DOMAIN</scope>
</reference>
<reference key="25">
    <citation type="journal article" date="1998" name="J. Biol. Chem.">
        <title>Baculovirus-mediated expression of truncated modular fragments from the catalytic region of human complement serine protease C1s. Evidence for the involvement of both complement control protein modules in the recognition of the C4 protein substrate.</title>
        <authorList>
            <person name="Rossi V."/>
            <person name="Bally I."/>
            <person name="Thielens N.M."/>
            <person name="Esser A.F."/>
            <person name="Arlaud G.J."/>
        </authorList>
    </citation>
    <scope>FUNCTION</scope>
    <scope>CATALYTIC ACTIVITY</scope>
    <scope>BIOPHYSICOCHEMICAL PROPERTIES</scope>
</reference>
<reference key="26">
    <citation type="journal article" date="2001" name="J. Biol. Chem.">
        <title>Assembly and enzymatic properties of the catalytic domain of human complement protease C1r.</title>
        <authorList>
            <person name="Lacroix M."/>
            <person name="Ebel C."/>
            <person name="Kardos J."/>
            <person name="Dobo J."/>
            <person name="Gal P."/>
            <person name="Zavodszky P."/>
            <person name="Arlaud G.J."/>
            <person name="Thielens N.M."/>
        </authorList>
    </citation>
    <scope>FUNCTION</scope>
    <scope>PROTEOLYTIC CLEAVAGE</scope>
    <scope>ACTIVITY REGULATION</scope>
</reference>
<reference key="27">
    <citation type="journal article" date="2001" name="J. Biol. Chem.">
        <title>Substrate specificities of recombinant mannan-binding lectin-associated serine proteases-1 and -2.</title>
        <authorList>
            <person name="Rossi V."/>
            <person name="Cseh S."/>
            <person name="Bally I."/>
            <person name="Thielens N.M."/>
            <person name="Jensenius J.C."/>
            <person name="Arlaud G.J."/>
        </authorList>
    </citation>
    <scope>CATALYTIC ACTIVITY</scope>
    <scope>BIOPHYSICOCHEMICAL PROPERTIES</scope>
    <scope>ACTIVITY REGULATION</scope>
</reference>
<reference key="28">
    <citation type="journal article" date="2001" name="J. Immunol.">
        <title>Molecular basis of a selective C1s deficiency associated with early onset multiple autoimmune diseases.</title>
        <authorList>
            <person name="Dragon-Durey M.-A."/>
            <person name="Quartier P."/>
            <person name="Fremeaux-Bacchi V."/>
            <person name="Blouin J."/>
            <person name="de Barace C."/>
            <person name="Prieur A.-M."/>
            <person name="Weiss L."/>
            <person name="Fridman W.-H."/>
        </authorList>
    </citation>
    <scope>INVOLVEMENT IN COMPLEMENT COMPONENT C1S DEFICIENCY</scope>
</reference>
<reference key="29">
    <citation type="journal article" date="2005" name="J. Biol. Chem.">
        <title>Elucidation of the substrate specificity of the C1s protease of the classical complement pathway.</title>
        <authorList>
            <person name="Kerr F.K."/>
            <person name="O'Brien G."/>
            <person name="Quinsey N.S."/>
            <person name="Whisstock J.C."/>
            <person name="Boyd S."/>
            <person name="de la Banda M.G."/>
            <person name="Kaiserman D."/>
            <person name="Matthews A.Y."/>
            <person name="Bird P.I."/>
            <person name="Pike R.N."/>
        </authorList>
    </citation>
    <scope>FUNCTION</scope>
    <scope>CATALYTIC ACTIVITY</scope>
</reference>
<reference key="30">
    <citation type="journal article" date="2005" name="J. Proteome Res.">
        <title>Human plasma N-glycoproteome analysis by immunoaffinity subtraction, hydrazide chemistry, and mass spectrometry.</title>
        <authorList>
            <person name="Liu T."/>
            <person name="Qian W.-J."/>
            <person name="Gritsenko M.A."/>
            <person name="Camp D.G. II"/>
            <person name="Monroe M.E."/>
            <person name="Moore R.J."/>
            <person name="Smith R.D."/>
        </authorList>
    </citation>
    <scope>GLYCOSYLATION [LARGE SCALE ANALYSIS] AT ASN-406</scope>
    <source>
        <tissue>Plasma</tissue>
    </source>
</reference>
<reference key="31">
    <citation type="journal article" date="2009" name="J. Proteome Res.">
        <title>Glycoproteomics analysis of human liver tissue by combination of multiple enzyme digestion and hydrazide chemistry.</title>
        <authorList>
            <person name="Chen R."/>
            <person name="Jiang X."/>
            <person name="Sun D."/>
            <person name="Han G."/>
            <person name="Wang F."/>
            <person name="Ye M."/>
            <person name="Wang L."/>
            <person name="Zou H."/>
        </authorList>
    </citation>
    <scope>GLYCOSYLATION [LARGE SCALE ANALYSIS] AT ASN-174 AND ASN-406</scope>
    <source>
        <tissue>Liver</tissue>
    </source>
</reference>
<reference key="32">
    <citation type="journal article" date="2009" name="J. Biol. Chem.">
        <title>Identification of the C1q-binding Sites of Human C1r and C1s: a refined three-dimensional model of the C1 complex of complement.</title>
        <authorList>
            <person name="Bally I."/>
            <person name="Rossi V."/>
            <person name="Lunardi T."/>
            <person name="Thielens N.M."/>
            <person name="Gaboriaud C."/>
            <person name="Arlaud G.J."/>
        </authorList>
    </citation>
    <scope>SUBUNIT</scope>
    <scope>MUTAGENESIS OF GLU-35; GLU-60; GLU-63; TYR-67; ASP-113; GLU-226 AND ASP-275</scope>
</reference>
<reference key="33">
    <citation type="journal article" date="2009" name="Osteoarthritis Cartilage">
        <title>Complement 1s is the serine protease that cleaves IGFBP-5 in human osteoarthritic joint fluid.</title>
        <authorList>
            <person name="Busby W.H. Jr."/>
            <person name="Yocum S.A."/>
            <person name="Rowland M."/>
            <person name="Kellner D."/>
            <person name="Lazerwith S."/>
            <person name="Sverdrup F."/>
            <person name="Yates M."/>
            <person name="Radabaugh M."/>
            <person name="Clemmons D.R."/>
        </authorList>
    </citation>
    <scope>FUNCTION</scope>
</reference>
<reference key="34">
    <citation type="journal article" date="2012" name="Proc. Natl. Acad. Sci. U.S.A.">
        <title>Structural basis for activation of the complement system by component C4 cleavage.</title>
        <authorList>
            <person name="Kidmose R.T."/>
            <person name="Laursen N.S."/>
            <person name="Dobo J."/>
            <person name="Kjaer T.R."/>
            <person name="Sirotkina S."/>
            <person name="Yatime L."/>
            <person name="Sottrup-Jensen L."/>
            <person name="Thiel S."/>
            <person name="Gal P."/>
            <person name="Andersen G.R."/>
        </authorList>
    </citation>
    <scope>FUNCTION</scope>
    <scope>CATALYTIC ACTIVITY</scope>
</reference>
<reference key="35">
    <citation type="journal article" date="2014" name="J. Proteomics">
        <title>An enzyme assisted RP-RPLC approach for in-depth analysis of human liver phosphoproteome.</title>
        <authorList>
            <person name="Bian Y."/>
            <person name="Song C."/>
            <person name="Cheng K."/>
            <person name="Dong M."/>
            <person name="Wang F."/>
            <person name="Huang J."/>
            <person name="Sun D."/>
            <person name="Wang L."/>
            <person name="Ye M."/>
            <person name="Zou H."/>
        </authorList>
    </citation>
    <scope>IDENTIFICATION BY MASS SPECTROMETRY [LARGE SCALE ANALYSIS]</scope>
    <source>
        <tissue>Liver</tissue>
    </source>
</reference>
<reference key="36">
    <citation type="journal article" date="2016" name="Am. J. Hum. Genet.">
        <title>Periodontal Ehlers-Danlos syndrome is caused by mutations in C1R and C1S, which encode subcomponents C1r and C1s of complement.</title>
        <authorList>
            <consortium name="Molecular Basis of Periodontal EDS Consortium"/>
            <person name="Kapferer-Seebacher I."/>
            <person name="Pepin M."/>
            <person name="Werner R."/>
            <person name="Aitman T.J."/>
            <person name="Nordgren A."/>
            <person name="Stoiber H."/>
            <person name="Thielens N."/>
            <person name="Gaboriaud C."/>
            <person name="Amberger A."/>
            <person name="Schossig A."/>
            <person name="Gruber R."/>
            <person name="Giunta C."/>
            <person name="Bamshad M."/>
            <person name="Bjoerck E."/>
            <person name="Chen C."/>
            <person name="Chitayat D."/>
            <person name="Dorschner M."/>
            <person name="Schmitt-Egenolf M."/>
            <person name="Hale C.J."/>
            <person name="Hanna D."/>
            <person name="Hennies H.C."/>
            <person name="Heiss-Kisielewsky I."/>
            <person name="Lindstrand A."/>
            <person name="Lundberg P."/>
            <person name="Mitchell A.L."/>
            <person name="Nickerson D.A."/>
            <person name="Reinstein E."/>
            <person name="Rohrbach M."/>
            <person name="Romani N."/>
            <person name="Schmuth M."/>
            <person name="Silver R."/>
            <person name="Taylan F."/>
            <person name="Vandersteen A."/>
            <person name="Vandrovcova J."/>
            <person name="Weerakkody R."/>
            <person name="Yang M."/>
            <person name="Pope F.M."/>
            <person name="Byers P.H."/>
            <person name="Zschocke J."/>
        </authorList>
    </citation>
    <scope>INVOLVEMENT IN EDSPD2</scope>
    <scope>VARIANTS EDSPD2 ARG-294 AND VAL-316 DEL</scope>
</reference>
<reference key="37">
    <citation type="journal article" date="2017" name="Proc. Natl. Acad. Sci. U.S.A.">
        <title>Structure and activation of C1, the complex initiating the classical pathway of the complement cascade.</title>
        <authorList>
            <person name="Mortensen S.A."/>
            <person name="Sander B."/>
            <person name="Jensen R.K."/>
            <person name="Pedersen J.S."/>
            <person name="Golas M.M."/>
            <person name="Jensenius J.C."/>
            <person name="Hansen A.G."/>
            <person name="Thiel S."/>
            <person name="Andersen G.R."/>
        </authorList>
    </citation>
    <scope>SUBUNIT</scope>
</reference>
<reference key="38">
    <citation type="journal article" date="2021" name="Proc. Natl. Acad. Sci. U.S.A.">
        <title>C1q binding to surface-bound IgG is stabilized by C1r2s2 proteases.</title>
        <authorList>
            <person name="Zwarthoff S.A."/>
            <person name="Widmer K."/>
            <person name="Kuipers A."/>
            <person name="Strasser J."/>
            <person name="Ruyken M."/>
            <person name="Aerts P.C."/>
            <person name="de Haas C.J.C."/>
            <person name="Ugurlar D."/>
            <person name="den Boer M.A."/>
            <person name="Vidarsson G."/>
            <person name="van Strijp J.A.G."/>
            <person name="Gros P."/>
            <person name="Parren P.W.H.I."/>
            <person name="van Kessel K.P.M."/>
            <person name="Preiner J."/>
            <person name="Beurskens F.J."/>
            <person name="Schuurman J."/>
            <person name="Ricklin D."/>
            <person name="Rooijakkers S.H.M."/>
        </authorList>
    </citation>
    <scope>FUNCTION</scope>
    <scope>SUBUNIT</scope>
    <scope>SUBCELLULAR LOCATION</scope>
</reference>
<reference key="39">
    <citation type="journal article" date="2000" name="EMBO J.">
        <title>Crystal structure of the catalytic domain of human complement c1s: a serine protease with a handle.</title>
        <authorList>
            <person name="Gaboriaud C."/>
            <person name="Rossi V."/>
            <person name="Bally I."/>
            <person name="Arlaud G.J."/>
            <person name="Fontecilla-Camps J.-C."/>
        </authorList>
    </citation>
    <scope>X-RAY CRYSTALLOGRAPHY (1.7 ANGSTROMS) OF 358-688</scope>
    <scope>ACTIVE SITES</scope>
</reference>
<reference key="40">
    <citation type="journal article" date="2003" name="J. Biol. Chem.">
        <title>X-ray structure of the Ca2+-binding interaction domain of C1s. Insights into the assembly of the C1 complex of complement.</title>
        <authorList>
            <person name="Gregory L.A."/>
            <person name="Thielens N.M."/>
            <person name="Arlaud G.J."/>
            <person name="Fontecilla-Camps J.-C."/>
            <person name="Gaboriaud C."/>
        </authorList>
    </citation>
    <scope>X-RAY CRYSTALLOGRAPHY (1.5 ANGSTROMS) OF 16-174</scope>
    <scope>CALCIUM-BINDING SITES</scope>
    <scope>GLYCOSYLATION AT ASN-406</scope>
</reference>
<reference evidence="42" key="41">
    <citation type="journal article" date="2013" name="J. Biol. Chem.">
        <title>A molecular switch governs the interaction between the human complement protease C1s and its substrate, complement C4.</title>
        <authorList>
            <person name="Perry A.J."/>
            <person name="Wijeyewickrema L.C."/>
            <person name="Wilmann P.G."/>
            <person name="Gunzburg M.J."/>
            <person name="D'Andrea L."/>
            <person name="Irving J.A."/>
            <person name="Pang S.S."/>
            <person name="Duncan R.C."/>
            <person name="Wilce J.A."/>
            <person name="Whisstock J.C."/>
            <person name="Pike R.N."/>
        </authorList>
    </citation>
    <scope>X-RAY CRYSTALLOGRAPHY (2.66 ANGSTROMS) OF 292-688</scope>
    <scope>DISULFIDE BONDS</scope>
</reference>
<reference evidence="43 44 45 46" key="42">
    <citation type="journal article" date="2013" name="Proc. Natl. Acad. Sci. U.S.A.">
        <title>Structural basis of the C1q/C1s interaction and its central role in assembly of the C1 complex of complement activation.</title>
        <authorList>
            <person name="Venkatraman Girija U."/>
            <person name="Gingras A.R."/>
            <person name="Marshall J.E."/>
            <person name="Panchal R."/>
            <person name="Sheikh M.A."/>
            <person name="Harper J.A."/>
            <person name="Gal P."/>
            <person name="Schwaeble W.J."/>
            <person name="Mitchell D.A."/>
            <person name="Moody P.C."/>
            <person name="Wallis R."/>
        </authorList>
    </citation>
    <scope>X-RAY CRYSTALLOGRAPHY (2.00 ANGSTROMS) OF 172-358 IN COMPLEX WITH CA(2+)</scope>
    <scope>GLYCOSYLATION AT ASN-174</scope>
</reference>
<reference evidence="47 48" key="43">
    <citation type="journal article" date="2018" name="Proc. Natl. Acad. Sci. U.S.A.">
        <title>Structure of the C1r-C1s interaction of the C1 complex of complement activation.</title>
        <authorList>
            <person name="Almitairi J.O.M."/>
            <person name="Venkatraman Girija U."/>
            <person name="Furze C.M."/>
            <person name="Simpson-Gray X."/>
            <person name="Badakshi F."/>
            <person name="Marshall J.E."/>
            <person name="Schwaeble W.J."/>
            <person name="Mitchell D.A."/>
            <person name="Moody P.C.E."/>
            <person name="Wallis R."/>
        </authorList>
    </citation>
    <scope>X-RAY CRYSTALLOGRAPHY (4.2 ANGSTROMS) OF 17-292 IN COMPLEX WITH CA(2+)</scope>
    <scope>SUBUNIT</scope>
    <scope>DISULFIDE BONDS</scope>
</reference>
<accession>P09871</accession>
<accession>D3DUT4</accession>
<accession>Q9UCU7</accession>
<accession>Q9UCU8</accession>
<accession>Q9UCU9</accession>
<accession>Q9UCV0</accession>
<accession>Q9UCV1</accession>
<accession>Q9UCV2</accession>
<accession>Q9UCV3</accession>
<accession>Q9UCV4</accession>
<accession>Q9UCV5</accession>
<accession>Q9UM14</accession>
<keyword id="KW-0002">3D-structure</keyword>
<keyword id="KW-0106">Calcium</keyword>
<keyword id="KW-0180">Complement pathway</keyword>
<keyword id="KW-0903">Direct protein sequencing</keyword>
<keyword id="KW-0225">Disease variant</keyword>
<keyword id="KW-1015">Disulfide bond</keyword>
<keyword id="KW-0245">EGF-like domain</keyword>
<keyword id="KW-0248">Ehlers-Danlos syndrome</keyword>
<keyword id="KW-0325">Glycoprotein</keyword>
<keyword id="KW-0378">Hydrolase</keyword>
<keyword id="KW-0379">Hydroxylation</keyword>
<keyword id="KW-0391">Immunity</keyword>
<keyword id="KW-0399">Innate immunity</keyword>
<keyword id="KW-0479">Metal-binding</keyword>
<keyword id="KW-0645">Protease</keyword>
<keyword id="KW-1267">Proteomics identification</keyword>
<keyword id="KW-1185">Reference proteome</keyword>
<keyword id="KW-0677">Repeat</keyword>
<keyword id="KW-0964">Secreted</keyword>
<keyword id="KW-0720">Serine protease</keyword>
<keyword id="KW-0732">Signal</keyword>
<keyword id="KW-0768">Sushi</keyword>
<evidence type="ECO:0000255" key="1">
    <source>
        <dbReference type="PROSITE-ProRule" id="PRU00059"/>
    </source>
</evidence>
<evidence type="ECO:0000255" key="2">
    <source>
        <dbReference type="PROSITE-ProRule" id="PRU00274"/>
    </source>
</evidence>
<evidence type="ECO:0000255" key="3">
    <source>
        <dbReference type="PROSITE-ProRule" id="PRU00302"/>
    </source>
</evidence>
<evidence type="ECO:0000269" key="4">
    <source>
    </source>
</evidence>
<evidence type="ECO:0000269" key="5">
    <source>
    </source>
</evidence>
<evidence type="ECO:0000269" key="6">
    <source>
    </source>
</evidence>
<evidence type="ECO:0000269" key="7">
    <source>
    </source>
</evidence>
<evidence type="ECO:0000269" key="8">
    <source>
    </source>
</evidence>
<evidence type="ECO:0000269" key="9">
    <source>
    </source>
</evidence>
<evidence type="ECO:0000269" key="10">
    <source>
    </source>
</evidence>
<evidence type="ECO:0000269" key="11">
    <source>
    </source>
</evidence>
<evidence type="ECO:0000269" key="12">
    <source>
    </source>
</evidence>
<evidence type="ECO:0000269" key="13">
    <source>
    </source>
</evidence>
<evidence type="ECO:0000269" key="14">
    <source>
    </source>
</evidence>
<evidence type="ECO:0000269" key="15">
    <source>
    </source>
</evidence>
<evidence type="ECO:0000269" key="16">
    <source>
    </source>
</evidence>
<evidence type="ECO:0000269" key="17">
    <source>
    </source>
</evidence>
<evidence type="ECO:0000269" key="18">
    <source>
    </source>
</evidence>
<evidence type="ECO:0000269" key="19">
    <source>
    </source>
</evidence>
<evidence type="ECO:0000269" key="20">
    <source>
    </source>
</evidence>
<evidence type="ECO:0000269" key="21">
    <source>
    </source>
</evidence>
<evidence type="ECO:0000269" key="22">
    <source>
    </source>
</evidence>
<evidence type="ECO:0000269" key="23">
    <source>
    </source>
</evidence>
<evidence type="ECO:0000269" key="24">
    <source>
    </source>
</evidence>
<evidence type="ECO:0000269" key="25">
    <source>
    </source>
</evidence>
<evidence type="ECO:0000269" key="26">
    <source>
    </source>
</evidence>
<evidence type="ECO:0000269" key="27">
    <source>
    </source>
</evidence>
<evidence type="ECO:0000269" key="28">
    <source>
    </source>
</evidence>
<evidence type="ECO:0000269" key="29">
    <source>
    </source>
</evidence>
<evidence type="ECO:0000269" key="30">
    <source>
    </source>
</evidence>
<evidence type="ECO:0000269" key="31">
    <source>
    </source>
</evidence>
<evidence type="ECO:0000269" key="32">
    <source>
    </source>
</evidence>
<evidence type="ECO:0000269" key="33">
    <source>
    </source>
</evidence>
<evidence type="ECO:0000269" key="34">
    <source>
    </source>
</evidence>
<evidence type="ECO:0000269" key="35">
    <source>
    </source>
</evidence>
<evidence type="ECO:0000303" key="36">
    <source>
    </source>
</evidence>
<evidence type="ECO:0000303" key="37">
    <source>
    </source>
</evidence>
<evidence type="ECO:0000305" key="38"/>
<evidence type="ECO:0000305" key="39">
    <source>
    </source>
</evidence>
<evidence type="ECO:0000312" key="40">
    <source>
        <dbReference type="HGNC" id="HGNC:1247"/>
    </source>
</evidence>
<evidence type="ECO:0007744" key="41">
    <source>
        <dbReference type="PDB" id="1NZI"/>
    </source>
</evidence>
<evidence type="ECO:0007744" key="42">
    <source>
        <dbReference type="PDB" id="4J1Y"/>
    </source>
</evidence>
<evidence type="ECO:0007744" key="43">
    <source>
        <dbReference type="PDB" id="4LMF"/>
    </source>
</evidence>
<evidence type="ECO:0007744" key="44">
    <source>
        <dbReference type="PDB" id="4LOR"/>
    </source>
</evidence>
<evidence type="ECO:0007744" key="45">
    <source>
        <dbReference type="PDB" id="4LOS"/>
    </source>
</evidence>
<evidence type="ECO:0007744" key="46">
    <source>
        <dbReference type="PDB" id="4LOT"/>
    </source>
</evidence>
<evidence type="ECO:0007744" key="47">
    <source>
        <dbReference type="PDB" id="6F1C"/>
    </source>
</evidence>
<evidence type="ECO:0007744" key="48">
    <source>
        <dbReference type="PDB" id="6F1H"/>
    </source>
</evidence>
<evidence type="ECO:0007829" key="49">
    <source>
        <dbReference type="PDB" id="1ELV"/>
    </source>
</evidence>
<evidence type="ECO:0007829" key="50">
    <source>
        <dbReference type="PDB" id="1NZI"/>
    </source>
</evidence>
<evidence type="ECO:0007829" key="51">
    <source>
        <dbReference type="PDB" id="4J1Y"/>
    </source>
</evidence>
<evidence type="ECO:0007829" key="52">
    <source>
        <dbReference type="PDB" id="4LOR"/>
    </source>
</evidence>
<evidence type="ECO:0007829" key="53">
    <source>
        <dbReference type="PDB" id="4LOS"/>
    </source>
</evidence>
<evidence type="ECO:0007829" key="54">
    <source>
        <dbReference type="PDB" id="4LOT"/>
    </source>
</evidence>
<evidence type="ECO:0007829" key="55">
    <source>
        <dbReference type="PDB" id="8GMN"/>
    </source>
</evidence>
<evidence type="ECO:0007829" key="56">
    <source>
        <dbReference type="PDB" id="8TYP"/>
    </source>
</evidence>
<sequence length="688" mass="76684">MWCIVLFSLLAWVYAEPTMYGEILSPNYPQAYPSEVEKSWDIEVPEGYGIHLYFTHLDIELSENCAYDSVQIISGDTEEGRLCGQRSSNNPHSPIVEEFQVPYNKLQVIFKSDFSNEERFTGFAAYYVATDINECTDFVDVPCSHFCNNFIGGYFCSCPPEYFLHDDMKNCGVNCSGDVFTALIGEIASPNYPKPYPENSRCEYQIRLEKGFQVVVTLRREDFDVEAADSAGNCLDSLVFVAGDRQFGPYCGHGFPGPLNIETKSNALDIIFQTDLTGQKKGWKLRYHGDPMPCPKEDTPNSVWEPAKAKYVFRDVVQITCLDGFEVVEGRVGATSFYSTCQSNGKWSNSKLKCQPVDCGIPESIENGKVEDPESTLFGSVIRYTCEEPYYYMENGGGGEYHCAGNGSWVNEVLGPELPKCVPVCGVPREPFEEKQRIIGGSDADIKNFPWQVFFDNPWAGGALINEYWVLTAAHVVEGNREPTMYVGSTSVQTSRLAKSKMLTPEHVFIHPGWKLLEVPEGRTNFDNDIALVRLKDPVKMGPTVSPICLPGTSSDYNLMDGDLGLISGWGRTEKRDRAVRLKAARLPVAPLRKCKEVKVEKPTADAEAYVFTPNMICAGGEKGMDSCKGDSGGAFAVQDPNDKTKFYAAGLVSWGPQCGTYGLYTRVKNYVDWIMKTMQENSTPRED</sequence>
<name>C1S_HUMAN</name>